<keyword id="KW-0030">Aminoacyl-tRNA synthetase</keyword>
<keyword id="KW-0067">ATP-binding</keyword>
<keyword id="KW-0963">Cytoplasm</keyword>
<keyword id="KW-0436">Ligase</keyword>
<keyword id="KW-0547">Nucleotide-binding</keyword>
<keyword id="KW-0648">Protein biosynthesis</keyword>
<dbReference type="EC" id="6.1.1.19" evidence="1"/>
<dbReference type="EMBL" id="CP000446">
    <property type="protein sequence ID" value="ABI40562.1"/>
    <property type="molecule type" value="Genomic_DNA"/>
</dbReference>
<dbReference type="RefSeq" id="WP_011624227.1">
    <property type="nucleotide sequence ID" value="NC_008321.1"/>
</dbReference>
<dbReference type="SMR" id="Q0HEF5"/>
<dbReference type="GeneID" id="94729592"/>
<dbReference type="KEGG" id="she:Shewmr4_3496"/>
<dbReference type="HOGENOM" id="CLU_006406_5_1_6"/>
<dbReference type="GO" id="GO:0005737">
    <property type="term" value="C:cytoplasm"/>
    <property type="evidence" value="ECO:0007669"/>
    <property type="project" value="UniProtKB-SubCell"/>
</dbReference>
<dbReference type="GO" id="GO:0004814">
    <property type="term" value="F:arginine-tRNA ligase activity"/>
    <property type="evidence" value="ECO:0007669"/>
    <property type="project" value="UniProtKB-UniRule"/>
</dbReference>
<dbReference type="GO" id="GO:0005524">
    <property type="term" value="F:ATP binding"/>
    <property type="evidence" value="ECO:0007669"/>
    <property type="project" value="UniProtKB-UniRule"/>
</dbReference>
<dbReference type="GO" id="GO:0006420">
    <property type="term" value="P:arginyl-tRNA aminoacylation"/>
    <property type="evidence" value="ECO:0007669"/>
    <property type="project" value="UniProtKB-UniRule"/>
</dbReference>
<dbReference type="CDD" id="cd07956">
    <property type="entry name" value="Anticodon_Ia_Arg"/>
    <property type="match status" value="1"/>
</dbReference>
<dbReference type="CDD" id="cd00671">
    <property type="entry name" value="ArgRS_core"/>
    <property type="match status" value="1"/>
</dbReference>
<dbReference type="FunFam" id="1.10.730.10:FF:000001">
    <property type="entry name" value="Arginine--tRNA ligase"/>
    <property type="match status" value="1"/>
</dbReference>
<dbReference type="FunFam" id="3.30.1360.70:FF:000003">
    <property type="entry name" value="Arginine--tRNA ligase"/>
    <property type="match status" value="1"/>
</dbReference>
<dbReference type="FunFam" id="3.40.50.620:FF:000030">
    <property type="entry name" value="Arginine--tRNA ligase"/>
    <property type="match status" value="1"/>
</dbReference>
<dbReference type="Gene3D" id="3.30.1360.70">
    <property type="entry name" value="Arginyl tRNA synthetase N-terminal domain"/>
    <property type="match status" value="1"/>
</dbReference>
<dbReference type="Gene3D" id="3.40.50.620">
    <property type="entry name" value="HUPs"/>
    <property type="match status" value="1"/>
</dbReference>
<dbReference type="Gene3D" id="1.10.730.10">
    <property type="entry name" value="Isoleucyl-tRNA Synthetase, Domain 1"/>
    <property type="match status" value="1"/>
</dbReference>
<dbReference type="HAMAP" id="MF_00123">
    <property type="entry name" value="Arg_tRNA_synth"/>
    <property type="match status" value="1"/>
</dbReference>
<dbReference type="InterPro" id="IPR001412">
    <property type="entry name" value="aa-tRNA-synth_I_CS"/>
</dbReference>
<dbReference type="InterPro" id="IPR001278">
    <property type="entry name" value="Arg-tRNA-ligase"/>
</dbReference>
<dbReference type="InterPro" id="IPR005148">
    <property type="entry name" value="Arg-tRNA-synth_N"/>
</dbReference>
<dbReference type="InterPro" id="IPR036695">
    <property type="entry name" value="Arg-tRNA-synth_N_sf"/>
</dbReference>
<dbReference type="InterPro" id="IPR035684">
    <property type="entry name" value="ArgRS_core"/>
</dbReference>
<dbReference type="InterPro" id="IPR008909">
    <property type="entry name" value="DALR_anticod-bd"/>
</dbReference>
<dbReference type="InterPro" id="IPR014729">
    <property type="entry name" value="Rossmann-like_a/b/a_fold"/>
</dbReference>
<dbReference type="InterPro" id="IPR009080">
    <property type="entry name" value="tRNAsynth_Ia_anticodon-bd"/>
</dbReference>
<dbReference type="NCBIfam" id="TIGR00456">
    <property type="entry name" value="argS"/>
    <property type="match status" value="1"/>
</dbReference>
<dbReference type="PANTHER" id="PTHR11956:SF5">
    <property type="entry name" value="ARGININE--TRNA LIGASE, CYTOPLASMIC"/>
    <property type="match status" value="1"/>
</dbReference>
<dbReference type="PANTHER" id="PTHR11956">
    <property type="entry name" value="ARGINYL-TRNA SYNTHETASE"/>
    <property type="match status" value="1"/>
</dbReference>
<dbReference type="Pfam" id="PF03485">
    <property type="entry name" value="Arg_tRNA_synt_N"/>
    <property type="match status" value="1"/>
</dbReference>
<dbReference type="Pfam" id="PF05746">
    <property type="entry name" value="DALR_1"/>
    <property type="match status" value="1"/>
</dbReference>
<dbReference type="Pfam" id="PF00750">
    <property type="entry name" value="tRNA-synt_1d"/>
    <property type="match status" value="1"/>
</dbReference>
<dbReference type="PRINTS" id="PR01038">
    <property type="entry name" value="TRNASYNTHARG"/>
</dbReference>
<dbReference type="SMART" id="SM01016">
    <property type="entry name" value="Arg_tRNA_synt_N"/>
    <property type="match status" value="1"/>
</dbReference>
<dbReference type="SMART" id="SM00836">
    <property type="entry name" value="DALR_1"/>
    <property type="match status" value="1"/>
</dbReference>
<dbReference type="SUPFAM" id="SSF47323">
    <property type="entry name" value="Anticodon-binding domain of a subclass of class I aminoacyl-tRNA synthetases"/>
    <property type="match status" value="1"/>
</dbReference>
<dbReference type="SUPFAM" id="SSF55190">
    <property type="entry name" value="Arginyl-tRNA synthetase (ArgRS), N-terminal 'additional' domain"/>
    <property type="match status" value="1"/>
</dbReference>
<dbReference type="SUPFAM" id="SSF52374">
    <property type="entry name" value="Nucleotidylyl transferase"/>
    <property type="match status" value="1"/>
</dbReference>
<dbReference type="PROSITE" id="PS00178">
    <property type="entry name" value="AA_TRNA_LIGASE_I"/>
    <property type="match status" value="1"/>
</dbReference>
<proteinExistence type="inferred from homology"/>
<evidence type="ECO:0000255" key="1">
    <source>
        <dbReference type="HAMAP-Rule" id="MF_00123"/>
    </source>
</evidence>
<accession>Q0HEF5</accession>
<protein>
    <recommendedName>
        <fullName evidence="1">Arginine--tRNA ligase</fullName>
        <ecNumber evidence="1">6.1.1.19</ecNumber>
    </recommendedName>
    <alternativeName>
        <fullName evidence="1">Arginyl-tRNA synthetase</fullName>
        <shortName evidence="1">ArgRS</shortName>
    </alternativeName>
</protein>
<gene>
    <name evidence="1" type="primary">argS</name>
    <name type="ordered locus">Shewmr4_3496</name>
</gene>
<reference key="1">
    <citation type="submission" date="2006-08" db="EMBL/GenBank/DDBJ databases">
        <title>Complete sequence of Shewanella sp. MR-4.</title>
        <authorList>
            <consortium name="US DOE Joint Genome Institute"/>
            <person name="Copeland A."/>
            <person name="Lucas S."/>
            <person name="Lapidus A."/>
            <person name="Barry K."/>
            <person name="Detter J.C."/>
            <person name="Glavina del Rio T."/>
            <person name="Hammon N."/>
            <person name="Israni S."/>
            <person name="Dalin E."/>
            <person name="Tice H."/>
            <person name="Pitluck S."/>
            <person name="Kiss H."/>
            <person name="Brettin T."/>
            <person name="Bruce D."/>
            <person name="Han C."/>
            <person name="Tapia R."/>
            <person name="Gilna P."/>
            <person name="Schmutz J."/>
            <person name="Larimer F."/>
            <person name="Land M."/>
            <person name="Hauser L."/>
            <person name="Kyrpides N."/>
            <person name="Mikhailova N."/>
            <person name="Nealson K."/>
            <person name="Konstantinidis K."/>
            <person name="Klappenbach J."/>
            <person name="Tiedje J."/>
            <person name="Richardson P."/>
        </authorList>
    </citation>
    <scope>NUCLEOTIDE SEQUENCE [LARGE SCALE GENOMIC DNA]</scope>
    <source>
        <strain>MR-4</strain>
    </source>
</reference>
<organism>
    <name type="scientific">Shewanella sp. (strain MR-4)</name>
    <dbReference type="NCBI Taxonomy" id="60480"/>
    <lineage>
        <taxon>Bacteria</taxon>
        <taxon>Pseudomonadati</taxon>
        <taxon>Pseudomonadota</taxon>
        <taxon>Gammaproteobacteria</taxon>
        <taxon>Alteromonadales</taxon>
        <taxon>Shewanellaceae</taxon>
        <taxon>Shewanella</taxon>
    </lineage>
</organism>
<sequence length="581" mass="64898">MKSHIQSLLEQTIESFKQQGILPADFEARIQVDRTKDKSHGDLATNLAMMLTKAAGKNPRELAQLIIDNLPASAYVAKVEIAGPGFINFFIDDSALANQLQAAISDEHLGIKLPTPQTIVVDYSSPNLAKEMHVGHLRSTIIGDSVVRTLEFLGHKVIRQNHVGDWGTQFGMLLAYMEELRAQNGEQAQLELSDLETFYRAAKLRFDESAEFATRARQLVVELQSGDEYCNKLWREFNDISLSHCHEVYERLGVSLTRADVHGESAYNADLEQVVKDLDAQGLLTQSNGAKVVFQEEFRNKEGEALPVIIQKADGGYLYATTDLAAMRYRSSVLKADRVLYFVDLRQALHFQQVFSLAKLAKFVRNDMSLEHLGFGTMNGEDGRPFKTRTGGVVKLVDLLDEANTRALELVRSKNPDMDEATLAEIARVVGISAVKYADLSKNRTSDYIFSFEQMLSFEGNTAPYLLYAYTRVAGIFKRATDIDLSQAKIVLEHEKEKDLGNKLAQFGEILSRVIDKGQPHVLCGYLYELAGAFSSFYEACPVLAADNDEQKHSRLLLSQLTANTLQKGLNLLGIETLERM</sequence>
<name>SYR_SHESM</name>
<feature type="chain" id="PRO_1000018119" description="Arginine--tRNA ligase">
    <location>
        <begin position="1"/>
        <end position="581"/>
    </location>
</feature>
<feature type="short sequence motif" description="'HIGH' region">
    <location>
        <begin position="126"/>
        <end position="136"/>
    </location>
</feature>
<comment type="catalytic activity">
    <reaction evidence="1">
        <text>tRNA(Arg) + L-arginine + ATP = L-arginyl-tRNA(Arg) + AMP + diphosphate</text>
        <dbReference type="Rhea" id="RHEA:20301"/>
        <dbReference type="Rhea" id="RHEA-COMP:9658"/>
        <dbReference type="Rhea" id="RHEA-COMP:9673"/>
        <dbReference type="ChEBI" id="CHEBI:30616"/>
        <dbReference type="ChEBI" id="CHEBI:32682"/>
        <dbReference type="ChEBI" id="CHEBI:33019"/>
        <dbReference type="ChEBI" id="CHEBI:78442"/>
        <dbReference type="ChEBI" id="CHEBI:78513"/>
        <dbReference type="ChEBI" id="CHEBI:456215"/>
        <dbReference type="EC" id="6.1.1.19"/>
    </reaction>
</comment>
<comment type="subunit">
    <text evidence="1">Monomer.</text>
</comment>
<comment type="subcellular location">
    <subcellularLocation>
        <location evidence="1">Cytoplasm</location>
    </subcellularLocation>
</comment>
<comment type="similarity">
    <text evidence="1">Belongs to the class-I aminoacyl-tRNA synthetase family.</text>
</comment>